<accession>B9DRU2</accession>
<keyword id="KW-0030">Aminoacyl-tRNA synthetase</keyword>
<keyword id="KW-0067">ATP-binding</keyword>
<keyword id="KW-0963">Cytoplasm</keyword>
<keyword id="KW-0436">Ligase</keyword>
<keyword id="KW-0460">Magnesium</keyword>
<keyword id="KW-0479">Metal-binding</keyword>
<keyword id="KW-0547">Nucleotide-binding</keyword>
<keyword id="KW-0648">Protein biosynthesis</keyword>
<keyword id="KW-1185">Reference proteome</keyword>
<name>SYFA_STRU0</name>
<dbReference type="EC" id="6.1.1.20" evidence="1"/>
<dbReference type="EMBL" id="AM946015">
    <property type="protein sequence ID" value="CAR41568.1"/>
    <property type="molecule type" value="Genomic_DNA"/>
</dbReference>
<dbReference type="RefSeq" id="WP_012658196.1">
    <property type="nucleotide sequence ID" value="NC_012004.1"/>
</dbReference>
<dbReference type="SMR" id="B9DRU2"/>
<dbReference type="STRING" id="218495.SUB0678"/>
<dbReference type="KEGG" id="sub:SUB0678"/>
<dbReference type="eggNOG" id="COG0016">
    <property type="taxonomic scope" value="Bacteria"/>
</dbReference>
<dbReference type="HOGENOM" id="CLU_025086_0_1_9"/>
<dbReference type="OrthoDB" id="9800719at2"/>
<dbReference type="Proteomes" id="UP000000449">
    <property type="component" value="Chromosome"/>
</dbReference>
<dbReference type="GO" id="GO:0005737">
    <property type="term" value="C:cytoplasm"/>
    <property type="evidence" value="ECO:0007669"/>
    <property type="project" value="UniProtKB-SubCell"/>
</dbReference>
<dbReference type="GO" id="GO:0005524">
    <property type="term" value="F:ATP binding"/>
    <property type="evidence" value="ECO:0007669"/>
    <property type="project" value="UniProtKB-UniRule"/>
</dbReference>
<dbReference type="GO" id="GO:0140096">
    <property type="term" value="F:catalytic activity, acting on a protein"/>
    <property type="evidence" value="ECO:0007669"/>
    <property type="project" value="UniProtKB-ARBA"/>
</dbReference>
<dbReference type="GO" id="GO:0000287">
    <property type="term" value="F:magnesium ion binding"/>
    <property type="evidence" value="ECO:0007669"/>
    <property type="project" value="UniProtKB-UniRule"/>
</dbReference>
<dbReference type="GO" id="GO:0004826">
    <property type="term" value="F:phenylalanine-tRNA ligase activity"/>
    <property type="evidence" value="ECO:0007669"/>
    <property type="project" value="UniProtKB-UniRule"/>
</dbReference>
<dbReference type="GO" id="GO:0016740">
    <property type="term" value="F:transferase activity"/>
    <property type="evidence" value="ECO:0007669"/>
    <property type="project" value="UniProtKB-ARBA"/>
</dbReference>
<dbReference type="GO" id="GO:0000049">
    <property type="term" value="F:tRNA binding"/>
    <property type="evidence" value="ECO:0007669"/>
    <property type="project" value="InterPro"/>
</dbReference>
<dbReference type="GO" id="GO:0006432">
    <property type="term" value="P:phenylalanyl-tRNA aminoacylation"/>
    <property type="evidence" value="ECO:0007669"/>
    <property type="project" value="UniProtKB-UniRule"/>
</dbReference>
<dbReference type="CDD" id="cd00496">
    <property type="entry name" value="PheRS_alpha_core"/>
    <property type="match status" value="1"/>
</dbReference>
<dbReference type="FunFam" id="3.30.930.10:FF:000003">
    <property type="entry name" value="Phenylalanine--tRNA ligase alpha subunit"/>
    <property type="match status" value="1"/>
</dbReference>
<dbReference type="Gene3D" id="3.30.930.10">
    <property type="entry name" value="Bira Bifunctional Protein, Domain 2"/>
    <property type="match status" value="1"/>
</dbReference>
<dbReference type="HAMAP" id="MF_00281">
    <property type="entry name" value="Phe_tRNA_synth_alpha1"/>
    <property type="match status" value="1"/>
</dbReference>
<dbReference type="InterPro" id="IPR006195">
    <property type="entry name" value="aa-tRNA-synth_II"/>
</dbReference>
<dbReference type="InterPro" id="IPR045864">
    <property type="entry name" value="aa-tRNA-synth_II/BPL/LPL"/>
</dbReference>
<dbReference type="InterPro" id="IPR004529">
    <property type="entry name" value="Phe-tRNA-synth_IIc_asu"/>
</dbReference>
<dbReference type="InterPro" id="IPR004188">
    <property type="entry name" value="Phe-tRNA_ligase_II_N"/>
</dbReference>
<dbReference type="InterPro" id="IPR022911">
    <property type="entry name" value="Phe_tRNA_ligase_alpha1_bac"/>
</dbReference>
<dbReference type="InterPro" id="IPR002319">
    <property type="entry name" value="Phenylalanyl-tRNA_Synthase"/>
</dbReference>
<dbReference type="InterPro" id="IPR010978">
    <property type="entry name" value="tRNA-bd_arm"/>
</dbReference>
<dbReference type="NCBIfam" id="TIGR00468">
    <property type="entry name" value="pheS"/>
    <property type="match status" value="1"/>
</dbReference>
<dbReference type="PANTHER" id="PTHR11538:SF41">
    <property type="entry name" value="PHENYLALANINE--TRNA LIGASE, MITOCHONDRIAL"/>
    <property type="match status" value="1"/>
</dbReference>
<dbReference type="PANTHER" id="PTHR11538">
    <property type="entry name" value="PHENYLALANYL-TRNA SYNTHETASE"/>
    <property type="match status" value="1"/>
</dbReference>
<dbReference type="Pfam" id="PF02912">
    <property type="entry name" value="Phe_tRNA-synt_N"/>
    <property type="match status" value="1"/>
</dbReference>
<dbReference type="Pfam" id="PF01409">
    <property type="entry name" value="tRNA-synt_2d"/>
    <property type="match status" value="1"/>
</dbReference>
<dbReference type="SUPFAM" id="SSF55681">
    <property type="entry name" value="Class II aaRS and biotin synthetases"/>
    <property type="match status" value="1"/>
</dbReference>
<dbReference type="SUPFAM" id="SSF46589">
    <property type="entry name" value="tRNA-binding arm"/>
    <property type="match status" value="1"/>
</dbReference>
<dbReference type="PROSITE" id="PS50862">
    <property type="entry name" value="AA_TRNA_LIGASE_II"/>
    <property type="match status" value="1"/>
</dbReference>
<comment type="catalytic activity">
    <reaction evidence="1">
        <text>tRNA(Phe) + L-phenylalanine + ATP = L-phenylalanyl-tRNA(Phe) + AMP + diphosphate + H(+)</text>
        <dbReference type="Rhea" id="RHEA:19413"/>
        <dbReference type="Rhea" id="RHEA-COMP:9668"/>
        <dbReference type="Rhea" id="RHEA-COMP:9699"/>
        <dbReference type="ChEBI" id="CHEBI:15378"/>
        <dbReference type="ChEBI" id="CHEBI:30616"/>
        <dbReference type="ChEBI" id="CHEBI:33019"/>
        <dbReference type="ChEBI" id="CHEBI:58095"/>
        <dbReference type="ChEBI" id="CHEBI:78442"/>
        <dbReference type="ChEBI" id="CHEBI:78531"/>
        <dbReference type="ChEBI" id="CHEBI:456215"/>
        <dbReference type="EC" id="6.1.1.20"/>
    </reaction>
</comment>
<comment type="cofactor">
    <cofactor evidence="1">
        <name>Mg(2+)</name>
        <dbReference type="ChEBI" id="CHEBI:18420"/>
    </cofactor>
    <text evidence="1">Binds 2 magnesium ions per tetramer.</text>
</comment>
<comment type="subunit">
    <text evidence="1">Tetramer of two alpha and two beta subunits.</text>
</comment>
<comment type="subcellular location">
    <subcellularLocation>
        <location evidence="1">Cytoplasm</location>
    </subcellularLocation>
</comment>
<comment type="similarity">
    <text evidence="1">Belongs to the class-II aminoacyl-tRNA synthetase family. Phe-tRNA synthetase alpha subunit type 1 subfamily.</text>
</comment>
<proteinExistence type="inferred from homology"/>
<feature type="chain" id="PRO_1000199329" description="Phenylalanine--tRNA ligase alpha subunit">
    <location>
        <begin position="1"/>
        <end position="347"/>
    </location>
</feature>
<feature type="binding site" evidence="1">
    <location>
        <position position="261"/>
    </location>
    <ligand>
        <name>Mg(2+)</name>
        <dbReference type="ChEBI" id="CHEBI:18420"/>
        <note>shared with beta subunit</note>
    </ligand>
</feature>
<gene>
    <name evidence="1" type="primary">pheS</name>
    <name type="ordered locus">SUB0678</name>
</gene>
<organism>
    <name type="scientific">Streptococcus uberis (strain ATCC BAA-854 / 0140J)</name>
    <dbReference type="NCBI Taxonomy" id="218495"/>
    <lineage>
        <taxon>Bacteria</taxon>
        <taxon>Bacillati</taxon>
        <taxon>Bacillota</taxon>
        <taxon>Bacilli</taxon>
        <taxon>Lactobacillales</taxon>
        <taxon>Streptococcaceae</taxon>
        <taxon>Streptococcus</taxon>
    </lineage>
</organism>
<sequence>MDLQQQLEELKQQTLEHLTSLTGDHSKELQDLKVSVLGKKGTLTELLKGLKDLSADMRPIIGKQVNQVRDVLNTAFEEQSRIVEEAKIQAKLESESIDVTLPGRQMKLGNRHILTQTSEEIEDIFLGMGFQIVDGFEVEKDYYNFERMNLPKDHPARDMQDTFYITEEILLRTHTSPVQARTLDQHDFSKGPLKMVSPGRVFRRDTDDATHSHQFHQIEGLVVGKNISMGDLKGTLEMIIKKMFGEERKIRLRPSYFPFTEPSVEVDVSCFKCGGKGCNVCKGTGWIEILGAGMVHPRVLEMSGVNSEEYSGFAFGLGQERIAMLRYGINDIRGFYQGDMRFSEQFK</sequence>
<protein>
    <recommendedName>
        <fullName evidence="1">Phenylalanine--tRNA ligase alpha subunit</fullName>
        <ecNumber evidence="1">6.1.1.20</ecNumber>
    </recommendedName>
    <alternativeName>
        <fullName evidence="1">Phenylalanyl-tRNA synthetase alpha subunit</fullName>
        <shortName evidence="1">PheRS</shortName>
    </alternativeName>
</protein>
<evidence type="ECO:0000255" key="1">
    <source>
        <dbReference type="HAMAP-Rule" id="MF_00281"/>
    </source>
</evidence>
<reference key="1">
    <citation type="journal article" date="2009" name="BMC Genomics">
        <title>Evidence for niche adaptation in the genome of the bovine pathogen Streptococcus uberis.</title>
        <authorList>
            <person name="Ward P.N."/>
            <person name="Holden M.T.G."/>
            <person name="Leigh J.A."/>
            <person name="Lennard N."/>
            <person name="Bignell A."/>
            <person name="Barron A."/>
            <person name="Clark L."/>
            <person name="Quail M.A."/>
            <person name="Woodward J."/>
            <person name="Barrell B.G."/>
            <person name="Egan S.A."/>
            <person name="Field T.R."/>
            <person name="Maskell D."/>
            <person name="Kehoe M."/>
            <person name="Dowson C.G."/>
            <person name="Chanter N."/>
            <person name="Whatmore A.M."/>
            <person name="Bentley S.D."/>
            <person name="Parkhill J."/>
        </authorList>
    </citation>
    <scope>NUCLEOTIDE SEQUENCE [LARGE SCALE GENOMIC DNA]</scope>
    <source>
        <strain>ATCC BAA-854 / 0140J</strain>
    </source>
</reference>